<gene>
    <name evidence="2" type="primary">CASS4</name>
</gene>
<sequence>MKGAGGPDGAPKALLARALYDNHPDCSDELAFCRGDILTILEQDVPESEGWWTCLLHGRQGLAPANRLQILEEAPADGPCPPFFGGLEEAPGRSQENYEVPSPPTPGPVYEQMKSWVEGPPPPTVQIYEFPDPPTCARIVCEKTLSFPKQAIFTIPRAARTSLPALPCQVYDVPAQSRCPPASKEPGKQQLYDIPPSRQKATLGPLSSQANGQNVPLTSATALRRGGCNTLPNPQKSEWIYDTPVSLEKAGVQKASLANSGEELGHRGLPRYMSSFHSPPNSIARSHPPHPQKNGPMQKKLSLPEIPCYSFPPPKCMFPLDESVSYKVPSSFLIPRVEQQNTTPNIYDVPRAMPDVPQAGKELGKAGGPSENSVDHSSSWFCSRAASLSPEPDSISVSSSDSRASVLSSCSSTSTDSSSSSFSEEAAKELPLDLDSAKETVTALQHKVASSVSSLMHFVSRKWRFRDSLEANIDAIRRATDRIEESLREFLDFAHGVRGTAGNLTDSNLQTKIRDQLQTIANAYQILLETKERLESCGWSLEVLATDKVQNSPDDLERFVLVARTVPEDIKRFASIVIANGRLLFKSNCEKEEPVQWTPNAEFKLARRIQLPQKEGESYQRKAPFQKQRASEQPPELIEKNKTNACGQNPGSLIPRPLSQQNPEKRIHLSEHCRLYFGALLKAIGVLNGSLSNRQPPETFITQSKLIIMVGQKLVDTLCKETQERDFRNEILCGSSHLCSLLRNLALATKHAVLEYPSPAALGHLQAEARKLEQHTQQFRGTLE</sequence>
<feature type="chain" id="PRO_0000351206" description="Cas scaffolding protein family member 4">
    <location>
        <begin position="1"/>
        <end position="784"/>
    </location>
</feature>
<feature type="domain" description="SH3" evidence="4">
    <location>
        <begin position="11"/>
        <end position="73"/>
    </location>
</feature>
<feature type="region of interest" description="Disordered" evidence="5">
    <location>
        <begin position="343"/>
        <end position="376"/>
    </location>
</feature>
<feature type="region of interest" description="Disordered" evidence="5">
    <location>
        <begin position="614"/>
        <end position="635"/>
    </location>
</feature>
<feature type="coiled-coil region" evidence="3">
    <location>
        <begin position="466"/>
        <end position="536"/>
    </location>
</feature>
<feature type="modified residue" description="Phosphoserine" evidence="2">
    <location>
        <position position="197"/>
    </location>
</feature>
<feature type="modified residue" description="Phosphoserine" evidence="2">
    <location>
        <position position="246"/>
    </location>
</feature>
<feature type="modified residue" description="Phosphoserine" evidence="2">
    <location>
        <position position="302"/>
    </location>
</feature>
<feature type="modified residue" description="Phosphoserine" evidence="2">
    <location>
        <position position="373"/>
    </location>
</feature>
<feature type="modified residue" description="Phosphoserine" evidence="2">
    <location>
        <position position="387"/>
    </location>
</feature>
<feature type="splice variant" id="VSP_052952" description="In isoform 2." evidence="6">
    <location>
        <begin position="212"/>
        <end position="648"/>
    </location>
</feature>
<protein>
    <recommendedName>
        <fullName evidence="2">Cas scaffolding protein family member 4</fullName>
    </recommendedName>
</protein>
<dbReference type="EMBL" id="CR956640">
    <property type="protein sequence ID" value="CAN13138.1"/>
    <property type="molecule type" value="Genomic_DNA"/>
</dbReference>
<dbReference type="EMBL" id="CR956640">
    <property type="protein sequence ID" value="CAN13139.1"/>
    <property type="molecule type" value="Genomic_DNA"/>
</dbReference>
<dbReference type="RefSeq" id="NP_001103901.2">
    <molecule id="A5GFW5-1"/>
    <property type="nucleotide sequence ID" value="NM_001110431.2"/>
</dbReference>
<dbReference type="SMR" id="A5GFW5"/>
<dbReference type="FunCoup" id="A5GFW5">
    <property type="interactions" value="132"/>
</dbReference>
<dbReference type="STRING" id="9823.ENSSSCP00000042986"/>
<dbReference type="GlyGen" id="A5GFW5">
    <property type="glycosylation" value="2 sites"/>
</dbReference>
<dbReference type="PaxDb" id="9823-ENSSSCP00000007986"/>
<dbReference type="Ensembl" id="ENSSSCT00000088123.1">
    <molecule id="A5GFW5-2"/>
    <property type="protein sequence ID" value="ENSSSCP00000062821.1"/>
    <property type="gene ID" value="ENSSSCG00000007495.6"/>
</dbReference>
<dbReference type="Ensembl" id="ENSSSCT00025104952.1">
    <molecule id="A5GFW5-2"/>
    <property type="protein sequence ID" value="ENSSSCP00025046772.1"/>
    <property type="gene ID" value="ENSSSCG00025075922.1"/>
</dbReference>
<dbReference type="Ensembl" id="ENSSSCT00045033914.1">
    <molecule id="A5GFW5-1"/>
    <property type="protein sequence ID" value="ENSSSCP00045023512.1"/>
    <property type="gene ID" value="ENSSSCG00045019865.1"/>
</dbReference>
<dbReference type="Ensembl" id="ENSSSCT00050058992.1">
    <molecule id="A5GFW5-1"/>
    <property type="protein sequence ID" value="ENSSSCP00050025312.1"/>
    <property type="gene ID" value="ENSSSCG00050043342.1"/>
</dbReference>
<dbReference type="Ensembl" id="ENSSSCT00070036671.1">
    <molecule id="A5GFW5-1"/>
    <property type="protein sequence ID" value="ENSSSCP00070030660.1"/>
    <property type="gene ID" value="ENSSSCG00070018591.1"/>
</dbReference>
<dbReference type="Ensembl" id="ENSSSCT00070036674.1">
    <molecule id="A5GFW5-2"/>
    <property type="protein sequence ID" value="ENSSSCP00070030663.1"/>
    <property type="gene ID" value="ENSSSCG00070018591.1"/>
</dbReference>
<dbReference type="Ensembl" id="ENSSSCT00090004906">
    <molecule id="A5GFW5-1"/>
    <property type="protein sequence ID" value="ENSSSCP00090003007"/>
    <property type="gene ID" value="ENSSSCG00090002859"/>
</dbReference>
<dbReference type="Ensembl" id="ENSSSCT00110051074">
    <molecule id="A5GFW5-1"/>
    <property type="protein sequence ID" value="ENSSSCP00110035718"/>
    <property type="gene ID" value="ENSSSCG00110026585"/>
</dbReference>
<dbReference type="Ensembl" id="ENSSSCT00130026145">
    <molecule id="A5GFW5-1"/>
    <property type="protein sequence ID" value="ENSSSCP00130017900"/>
    <property type="gene ID" value="ENSSSCG00130012381"/>
</dbReference>
<dbReference type="GeneID" id="100126293"/>
<dbReference type="KEGG" id="ssc:100126293"/>
<dbReference type="CTD" id="57091"/>
<dbReference type="eggNOG" id="ENOG502QUJM">
    <property type="taxonomic scope" value="Eukaryota"/>
</dbReference>
<dbReference type="GeneTree" id="ENSGT00950000183008"/>
<dbReference type="HOGENOM" id="CLU_820243_0_0_1"/>
<dbReference type="InParanoid" id="A5GFW5"/>
<dbReference type="OrthoDB" id="5983572at2759"/>
<dbReference type="TreeFam" id="TF328782"/>
<dbReference type="Proteomes" id="UP000008227">
    <property type="component" value="Chromosome 17"/>
</dbReference>
<dbReference type="Proteomes" id="UP000314985">
    <property type="component" value="Chromosome 17"/>
</dbReference>
<dbReference type="Proteomes" id="UP000694570">
    <property type="component" value="Unplaced"/>
</dbReference>
<dbReference type="Proteomes" id="UP000694571">
    <property type="component" value="Unplaced"/>
</dbReference>
<dbReference type="Proteomes" id="UP000694720">
    <property type="component" value="Unplaced"/>
</dbReference>
<dbReference type="Proteomes" id="UP000694722">
    <property type="component" value="Unplaced"/>
</dbReference>
<dbReference type="Proteomes" id="UP000694723">
    <property type="component" value="Unplaced"/>
</dbReference>
<dbReference type="Proteomes" id="UP000694724">
    <property type="component" value="Unplaced"/>
</dbReference>
<dbReference type="Proteomes" id="UP000694725">
    <property type="component" value="Unplaced"/>
</dbReference>
<dbReference type="Proteomes" id="UP000694726">
    <property type="component" value="Unplaced"/>
</dbReference>
<dbReference type="Proteomes" id="UP000694727">
    <property type="component" value="Unplaced"/>
</dbReference>
<dbReference type="Proteomes" id="UP000694728">
    <property type="component" value="Unplaced"/>
</dbReference>
<dbReference type="Bgee" id="ENSSSCG00000007495">
    <property type="expression patterns" value="Expressed in blood and 23 other cell types or tissues"/>
</dbReference>
<dbReference type="ExpressionAtlas" id="A5GFW5">
    <property type="expression patterns" value="baseline"/>
</dbReference>
<dbReference type="GO" id="GO:0005737">
    <property type="term" value="C:cytoplasm"/>
    <property type="evidence" value="ECO:0000318"/>
    <property type="project" value="GO_Central"/>
</dbReference>
<dbReference type="GO" id="GO:0005856">
    <property type="term" value="C:cytoskeleton"/>
    <property type="evidence" value="ECO:0007669"/>
    <property type="project" value="UniProtKB-SubCell"/>
</dbReference>
<dbReference type="GO" id="GO:0005925">
    <property type="term" value="C:focal adhesion"/>
    <property type="evidence" value="ECO:0000250"/>
    <property type="project" value="UniProtKB"/>
</dbReference>
<dbReference type="GO" id="GO:0007155">
    <property type="term" value="P:cell adhesion"/>
    <property type="evidence" value="ECO:0007669"/>
    <property type="project" value="UniProtKB-KW"/>
</dbReference>
<dbReference type="GO" id="GO:0016477">
    <property type="term" value="P:cell migration"/>
    <property type="evidence" value="ECO:0000318"/>
    <property type="project" value="GO_Central"/>
</dbReference>
<dbReference type="GO" id="GO:0007169">
    <property type="term" value="P:cell surface receptor protein tyrosine kinase signaling pathway"/>
    <property type="evidence" value="ECO:0000318"/>
    <property type="project" value="GO_Central"/>
</dbReference>
<dbReference type="GO" id="GO:0030335">
    <property type="term" value="P:positive regulation of cell migration"/>
    <property type="evidence" value="ECO:0000250"/>
    <property type="project" value="UniProtKB"/>
</dbReference>
<dbReference type="GO" id="GO:0061098">
    <property type="term" value="P:positive regulation of protein tyrosine kinase activity"/>
    <property type="evidence" value="ECO:0000250"/>
    <property type="project" value="UniProtKB"/>
</dbReference>
<dbReference type="GO" id="GO:1900026">
    <property type="term" value="P:positive regulation of substrate adhesion-dependent cell spreading"/>
    <property type="evidence" value="ECO:0000250"/>
    <property type="project" value="UniProtKB"/>
</dbReference>
<dbReference type="CDD" id="cd12000">
    <property type="entry name" value="SH3_CASS4"/>
    <property type="match status" value="1"/>
</dbReference>
<dbReference type="FunFam" id="1.20.120.830:FF:000001">
    <property type="entry name" value="BCAR1 scaffold protein, Cas family member"/>
    <property type="match status" value="1"/>
</dbReference>
<dbReference type="FunFam" id="1.20.120.230:FF:000015">
    <property type="entry name" value="Cas scaffold protein family member 4"/>
    <property type="match status" value="1"/>
</dbReference>
<dbReference type="FunFam" id="2.30.30.40:FF:000147">
    <property type="entry name" value="Cas scaffold protein family member 4"/>
    <property type="match status" value="1"/>
</dbReference>
<dbReference type="Gene3D" id="1.20.120.230">
    <property type="entry name" value="Alpha-catenin/vinculin-like"/>
    <property type="match status" value="1"/>
</dbReference>
<dbReference type="Gene3D" id="1.20.120.830">
    <property type="entry name" value="Serine-rich domain"/>
    <property type="match status" value="1"/>
</dbReference>
<dbReference type="Gene3D" id="2.30.30.40">
    <property type="entry name" value="SH3 Domains"/>
    <property type="match status" value="1"/>
</dbReference>
<dbReference type="InterPro" id="IPR021901">
    <property type="entry name" value="CAS_C"/>
</dbReference>
<dbReference type="InterPro" id="IPR037362">
    <property type="entry name" value="CAS_fam"/>
</dbReference>
<dbReference type="InterPro" id="IPR035744">
    <property type="entry name" value="CASS4_SH3"/>
</dbReference>
<dbReference type="InterPro" id="IPR014928">
    <property type="entry name" value="Serine_rich_dom"/>
</dbReference>
<dbReference type="InterPro" id="IPR038319">
    <property type="entry name" value="Serine_rich_sf"/>
</dbReference>
<dbReference type="InterPro" id="IPR036028">
    <property type="entry name" value="SH3-like_dom_sf"/>
</dbReference>
<dbReference type="InterPro" id="IPR001452">
    <property type="entry name" value="SH3_domain"/>
</dbReference>
<dbReference type="PANTHER" id="PTHR10654">
    <property type="entry name" value="CAS SCAFFOLDING PROTEIN"/>
    <property type="match status" value="1"/>
</dbReference>
<dbReference type="PANTHER" id="PTHR10654:SF19">
    <property type="entry name" value="CAS SCAFFOLDING PROTEIN FAMILY MEMBER 4"/>
    <property type="match status" value="1"/>
</dbReference>
<dbReference type="Pfam" id="PF12026">
    <property type="entry name" value="CAS_C"/>
    <property type="match status" value="1"/>
</dbReference>
<dbReference type="Pfam" id="PF08824">
    <property type="entry name" value="Serine_rich"/>
    <property type="match status" value="1"/>
</dbReference>
<dbReference type="Pfam" id="PF14604">
    <property type="entry name" value="SH3_9"/>
    <property type="match status" value="1"/>
</dbReference>
<dbReference type="SMART" id="SM00326">
    <property type="entry name" value="SH3"/>
    <property type="match status" value="1"/>
</dbReference>
<dbReference type="SUPFAM" id="SSF50044">
    <property type="entry name" value="SH3-domain"/>
    <property type="match status" value="1"/>
</dbReference>
<dbReference type="PROSITE" id="PS50002">
    <property type="entry name" value="SH3"/>
    <property type="match status" value="1"/>
</dbReference>
<comment type="function">
    <text evidence="1">Docking protein that plays a role in tyrosine kinase-based signaling related to cell adhesion and cell spreading. Regulates PTK2/FAK1 activity, focal adhesion integrity, and cell spreading (By similarity).</text>
</comment>
<comment type="subunit">
    <text evidence="1">Interacts (via SH3 domain) with PTK2/FAK1 (via C-terminus).</text>
</comment>
<comment type="subcellular location">
    <subcellularLocation>
        <location evidence="2">Cytoplasm</location>
        <location evidence="2">Cytoskeleton</location>
    </subcellularLocation>
    <subcellularLocation>
        <location evidence="2">Cell junction</location>
        <location evidence="2">Focal adhesion</location>
    </subcellularLocation>
</comment>
<comment type="alternative products">
    <event type="alternative splicing"/>
    <isoform>
        <id>A5GFW5-1</id>
        <name>1</name>
        <sequence type="displayed"/>
    </isoform>
    <isoform>
        <id>A5GFW5-2</id>
        <name>2</name>
        <sequence type="described" ref="VSP_052952"/>
    </isoform>
</comment>
<comment type="domain">
    <text evidence="1">The SH3 domain interacts with the C-terminal region of PTK2/FAK1.</text>
</comment>
<comment type="PTM">
    <text evidence="2">Phosphorylated on tyrosines by SRC.</text>
</comment>
<comment type="similarity">
    <text evidence="3">Belongs to the CAS family.</text>
</comment>
<reference evidence="7" key="1">
    <citation type="submission" date="2007-05" db="EMBL/GenBank/DDBJ databases">
        <authorList>
            <consortium name="Porcine genome sequencing project"/>
        </authorList>
    </citation>
    <scope>NUCLEOTIDE SEQUENCE [LARGE SCALE GENOMIC DNA]</scope>
</reference>
<accession>A5GFW5</accession>
<accession>A5GFW4</accession>
<proteinExistence type="inferred from homology"/>
<name>CASS4_PIG</name>
<keyword id="KW-0025">Alternative splicing</keyword>
<keyword id="KW-0130">Cell adhesion</keyword>
<keyword id="KW-0965">Cell junction</keyword>
<keyword id="KW-0175">Coiled coil</keyword>
<keyword id="KW-0963">Cytoplasm</keyword>
<keyword id="KW-0206">Cytoskeleton</keyword>
<keyword id="KW-0597">Phosphoprotein</keyword>
<keyword id="KW-1185">Reference proteome</keyword>
<keyword id="KW-0728">SH3 domain</keyword>
<organism>
    <name type="scientific">Sus scrofa</name>
    <name type="common">Pig</name>
    <dbReference type="NCBI Taxonomy" id="9823"/>
    <lineage>
        <taxon>Eukaryota</taxon>
        <taxon>Metazoa</taxon>
        <taxon>Chordata</taxon>
        <taxon>Craniata</taxon>
        <taxon>Vertebrata</taxon>
        <taxon>Euteleostomi</taxon>
        <taxon>Mammalia</taxon>
        <taxon>Eutheria</taxon>
        <taxon>Laurasiatheria</taxon>
        <taxon>Artiodactyla</taxon>
        <taxon>Suina</taxon>
        <taxon>Suidae</taxon>
        <taxon>Sus</taxon>
    </lineage>
</organism>
<evidence type="ECO:0000250" key="1"/>
<evidence type="ECO:0000250" key="2">
    <source>
        <dbReference type="UniProtKB" id="Q9NQ75"/>
    </source>
</evidence>
<evidence type="ECO:0000255" key="3"/>
<evidence type="ECO:0000255" key="4">
    <source>
        <dbReference type="PROSITE-ProRule" id="PRU00192"/>
    </source>
</evidence>
<evidence type="ECO:0000256" key="5">
    <source>
        <dbReference type="SAM" id="MobiDB-lite"/>
    </source>
</evidence>
<evidence type="ECO:0000305" key="6"/>
<evidence type="ECO:0000312" key="7">
    <source>
        <dbReference type="EMBL" id="CAN13139.1"/>
    </source>
</evidence>